<reference key="1">
    <citation type="journal article" date="2007" name="Nat. Biotechnol.">
        <title>Genome sequence and identification of candidate vaccine antigens from the animal pathogen Dichelobacter nodosus.</title>
        <authorList>
            <person name="Myers G.S.A."/>
            <person name="Parker D."/>
            <person name="Al-Hasani K."/>
            <person name="Kennan R.M."/>
            <person name="Seemann T."/>
            <person name="Ren Q."/>
            <person name="Badger J.H."/>
            <person name="Selengut J.D."/>
            <person name="Deboy R.T."/>
            <person name="Tettelin H."/>
            <person name="Boyce J.D."/>
            <person name="McCarl V.P."/>
            <person name="Han X."/>
            <person name="Nelson W.C."/>
            <person name="Madupu R."/>
            <person name="Mohamoud Y."/>
            <person name="Holley T."/>
            <person name="Fedorova N."/>
            <person name="Khouri H."/>
            <person name="Bottomley S.P."/>
            <person name="Whittington R.J."/>
            <person name="Adler B."/>
            <person name="Songer J.G."/>
            <person name="Rood J.I."/>
            <person name="Paulsen I.T."/>
        </authorList>
    </citation>
    <scope>NUCLEOTIDE SEQUENCE [LARGE SCALE GENOMIC DNA]</scope>
    <source>
        <strain>VCS1703A</strain>
    </source>
</reference>
<keyword id="KW-0997">Cell inner membrane</keyword>
<keyword id="KW-1003">Cell membrane</keyword>
<keyword id="KW-0406">Ion transport</keyword>
<keyword id="KW-0472">Membrane</keyword>
<keyword id="KW-0520">NAD</keyword>
<keyword id="KW-1185">Reference proteome</keyword>
<keyword id="KW-0915">Sodium</keyword>
<keyword id="KW-0739">Sodium transport</keyword>
<keyword id="KW-1278">Translocase</keyword>
<keyword id="KW-0812">Transmembrane</keyword>
<keyword id="KW-1133">Transmembrane helix</keyword>
<keyword id="KW-0813">Transport</keyword>
<keyword id="KW-0830">Ubiquinone</keyword>
<protein>
    <recommendedName>
        <fullName evidence="1">Na(+)-translocating NADH-quinone reductase subunit E</fullName>
        <shortName evidence="1">Na(+)-NQR subunit E</shortName>
        <shortName evidence="1">Na(+)-translocating NQR subunit E</shortName>
        <ecNumber evidence="1">7.2.1.1</ecNumber>
    </recommendedName>
    <alternativeName>
        <fullName evidence="1">NQR complex subunit E</fullName>
    </alternativeName>
    <alternativeName>
        <fullName evidence="1">NQR-1 subunit E</fullName>
    </alternativeName>
</protein>
<comment type="function">
    <text evidence="1">NQR complex catalyzes the reduction of ubiquinone-1 to ubiquinol by two successive reactions, coupled with the transport of Na(+) ions from the cytoplasm to the periplasm. NqrA to NqrE are probably involved in the second step, the conversion of ubisemiquinone to ubiquinol.</text>
</comment>
<comment type="catalytic activity">
    <reaction evidence="1">
        <text>a ubiquinone + n Na(+)(in) + NADH + H(+) = a ubiquinol + n Na(+)(out) + NAD(+)</text>
        <dbReference type="Rhea" id="RHEA:47748"/>
        <dbReference type="Rhea" id="RHEA-COMP:9565"/>
        <dbReference type="Rhea" id="RHEA-COMP:9566"/>
        <dbReference type="ChEBI" id="CHEBI:15378"/>
        <dbReference type="ChEBI" id="CHEBI:16389"/>
        <dbReference type="ChEBI" id="CHEBI:17976"/>
        <dbReference type="ChEBI" id="CHEBI:29101"/>
        <dbReference type="ChEBI" id="CHEBI:57540"/>
        <dbReference type="ChEBI" id="CHEBI:57945"/>
        <dbReference type="EC" id="7.2.1.1"/>
    </reaction>
</comment>
<comment type="subunit">
    <text evidence="1">Composed of six subunits; NqrA, NqrB, NqrC, NqrD, NqrE and NqrF.</text>
</comment>
<comment type="subcellular location">
    <subcellularLocation>
        <location evidence="1">Cell inner membrane</location>
        <topology evidence="1">Multi-pass membrane protein</topology>
    </subcellularLocation>
</comment>
<comment type="similarity">
    <text evidence="1">Belongs to the NqrDE/RnfAE family.</text>
</comment>
<evidence type="ECO:0000255" key="1">
    <source>
        <dbReference type="HAMAP-Rule" id="MF_00429"/>
    </source>
</evidence>
<organism>
    <name type="scientific">Dichelobacter nodosus (strain VCS1703A)</name>
    <dbReference type="NCBI Taxonomy" id="246195"/>
    <lineage>
        <taxon>Bacteria</taxon>
        <taxon>Pseudomonadati</taxon>
        <taxon>Pseudomonadota</taxon>
        <taxon>Gammaproteobacteria</taxon>
        <taxon>Cardiobacteriales</taxon>
        <taxon>Cardiobacteriaceae</taxon>
        <taxon>Dichelobacter</taxon>
    </lineage>
</organism>
<name>NQRE_DICNV</name>
<accession>A5EUU4</accession>
<proteinExistence type="inferred from homology"/>
<dbReference type="EC" id="7.2.1.1" evidence="1"/>
<dbReference type="EMBL" id="CP000513">
    <property type="protein sequence ID" value="ABQ13337.1"/>
    <property type="molecule type" value="Genomic_DNA"/>
</dbReference>
<dbReference type="RefSeq" id="WP_012031131.1">
    <property type="nucleotide sequence ID" value="NC_009446.1"/>
</dbReference>
<dbReference type="SMR" id="A5EUU4"/>
<dbReference type="STRING" id="246195.DNO_0807"/>
<dbReference type="KEGG" id="dno:DNO_0807"/>
<dbReference type="eggNOG" id="COG2209">
    <property type="taxonomic scope" value="Bacteria"/>
</dbReference>
<dbReference type="HOGENOM" id="CLU_095255_0_0_6"/>
<dbReference type="OrthoDB" id="9803631at2"/>
<dbReference type="Proteomes" id="UP000000248">
    <property type="component" value="Chromosome"/>
</dbReference>
<dbReference type="GO" id="GO:0009276">
    <property type="term" value="C:Gram-negative-bacterium-type cell wall"/>
    <property type="evidence" value="ECO:0007669"/>
    <property type="project" value="InterPro"/>
</dbReference>
<dbReference type="GO" id="GO:0005886">
    <property type="term" value="C:plasma membrane"/>
    <property type="evidence" value="ECO:0007669"/>
    <property type="project" value="UniProtKB-SubCell"/>
</dbReference>
<dbReference type="GO" id="GO:0016655">
    <property type="term" value="F:oxidoreductase activity, acting on NAD(P)H, quinone or similar compound as acceptor"/>
    <property type="evidence" value="ECO:0007669"/>
    <property type="project" value="UniProtKB-UniRule"/>
</dbReference>
<dbReference type="GO" id="GO:0022904">
    <property type="term" value="P:respiratory electron transport chain"/>
    <property type="evidence" value="ECO:0007669"/>
    <property type="project" value="InterPro"/>
</dbReference>
<dbReference type="GO" id="GO:0006814">
    <property type="term" value="P:sodium ion transport"/>
    <property type="evidence" value="ECO:0007669"/>
    <property type="project" value="UniProtKB-UniRule"/>
</dbReference>
<dbReference type="HAMAP" id="MF_00429">
    <property type="entry name" value="NqrE"/>
    <property type="match status" value="1"/>
</dbReference>
<dbReference type="InterPro" id="IPR003667">
    <property type="entry name" value="NqrDE/RnfAE"/>
</dbReference>
<dbReference type="InterPro" id="IPR050133">
    <property type="entry name" value="NqrDE/RnfAE_oxidrdctase"/>
</dbReference>
<dbReference type="InterPro" id="IPR010967">
    <property type="entry name" value="NqrE"/>
</dbReference>
<dbReference type="NCBIfam" id="TIGR01940">
    <property type="entry name" value="nqrE"/>
    <property type="match status" value="1"/>
</dbReference>
<dbReference type="PANTHER" id="PTHR30335">
    <property type="entry name" value="INTEGRAL MEMBRANE PROTEIN OF SOXR-REDUCING COMPLEX"/>
    <property type="match status" value="1"/>
</dbReference>
<dbReference type="PANTHER" id="PTHR30335:SF1">
    <property type="entry name" value="NA(+)-TRANSLOCATING NADH-QUINONE REDUCTASE SUBUNIT E"/>
    <property type="match status" value="1"/>
</dbReference>
<dbReference type="Pfam" id="PF02508">
    <property type="entry name" value="Rnf-Nqr"/>
    <property type="match status" value="1"/>
</dbReference>
<dbReference type="PIRSF" id="PIRSF006102">
    <property type="entry name" value="NQR_DE"/>
    <property type="match status" value="1"/>
</dbReference>
<gene>
    <name evidence="1" type="primary">nqrE</name>
    <name type="ordered locus">DNO_0807</name>
</gene>
<feature type="chain" id="PRO_1000060190" description="Na(+)-translocating NADH-quinone reductase subunit E">
    <location>
        <begin position="1"/>
        <end position="203"/>
    </location>
</feature>
<feature type="transmembrane region" description="Helical" evidence="1">
    <location>
        <begin position="11"/>
        <end position="31"/>
    </location>
</feature>
<feature type="transmembrane region" description="Helical" evidence="1">
    <location>
        <begin position="35"/>
        <end position="55"/>
    </location>
</feature>
<feature type="transmembrane region" description="Helical" evidence="1">
    <location>
        <begin position="82"/>
        <end position="102"/>
    </location>
</feature>
<feature type="transmembrane region" description="Helical" evidence="1">
    <location>
        <begin position="115"/>
        <end position="135"/>
    </location>
</feature>
<feature type="transmembrane region" description="Helical" evidence="1">
    <location>
        <begin position="145"/>
        <end position="165"/>
    </location>
</feature>
<feature type="transmembrane region" description="Helical" evidence="1">
    <location>
        <begin position="181"/>
        <end position="201"/>
    </location>
</feature>
<sequence>MEHYLSLLIKSIFIENMALSFFLGMCTFLAVSKKISTAIGLGTAVIVVQTLTVPLNNLLYVYLLKDNAILWQHLGVNVDISFLGLIAYIGVIAAVVQILEMFLDKYVPALYSALGIFLPLITVNCAILAGSLFMVERNYTFQESMVYGVGSGVGWALAIAVMAGVREKMRYADVPKGLEGLGITFITAGLMAIGFMSFSGIQL</sequence>